<proteinExistence type="inferred from homology"/>
<comment type="similarity">
    <text evidence="1">Belongs to the bacterial ribosomal protein bL27 family.</text>
</comment>
<dbReference type="EMBL" id="CP000237">
    <property type="protein sequence ID" value="ABD46449.1"/>
    <property type="molecule type" value="Genomic_DNA"/>
</dbReference>
<dbReference type="RefSeq" id="WP_011452269.1">
    <property type="nucleotide sequence ID" value="NC_007798.1"/>
</dbReference>
<dbReference type="SMR" id="Q2GCN3"/>
<dbReference type="STRING" id="222891.NSE_0897"/>
<dbReference type="KEGG" id="nse:NSE_0897"/>
<dbReference type="eggNOG" id="COG0211">
    <property type="taxonomic scope" value="Bacteria"/>
</dbReference>
<dbReference type="HOGENOM" id="CLU_095424_4_1_5"/>
<dbReference type="OrthoDB" id="9803474at2"/>
<dbReference type="Proteomes" id="UP000001942">
    <property type="component" value="Chromosome"/>
</dbReference>
<dbReference type="GO" id="GO:1990904">
    <property type="term" value="C:ribonucleoprotein complex"/>
    <property type="evidence" value="ECO:0007669"/>
    <property type="project" value="UniProtKB-KW"/>
</dbReference>
<dbReference type="GO" id="GO:0005840">
    <property type="term" value="C:ribosome"/>
    <property type="evidence" value="ECO:0007669"/>
    <property type="project" value="UniProtKB-KW"/>
</dbReference>
<dbReference type="GO" id="GO:0003735">
    <property type="term" value="F:structural constituent of ribosome"/>
    <property type="evidence" value="ECO:0007669"/>
    <property type="project" value="InterPro"/>
</dbReference>
<dbReference type="GO" id="GO:0006412">
    <property type="term" value="P:translation"/>
    <property type="evidence" value="ECO:0007669"/>
    <property type="project" value="UniProtKB-UniRule"/>
</dbReference>
<dbReference type="FunFam" id="2.40.50.100:FF:000020">
    <property type="entry name" value="50S ribosomal protein L27"/>
    <property type="match status" value="1"/>
</dbReference>
<dbReference type="Gene3D" id="2.40.50.100">
    <property type="match status" value="1"/>
</dbReference>
<dbReference type="HAMAP" id="MF_00539">
    <property type="entry name" value="Ribosomal_bL27"/>
    <property type="match status" value="1"/>
</dbReference>
<dbReference type="InterPro" id="IPR001684">
    <property type="entry name" value="Ribosomal_bL27"/>
</dbReference>
<dbReference type="InterPro" id="IPR018261">
    <property type="entry name" value="Ribosomal_bL27_CS"/>
</dbReference>
<dbReference type="NCBIfam" id="TIGR00062">
    <property type="entry name" value="L27"/>
    <property type="match status" value="1"/>
</dbReference>
<dbReference type="PANTHER" id="PTHR15893:SF0">
    <property type="entry name" value="LARGE RIBOSOMAL SUBUNIT PROTEIN BL27M"/>
    <property type="match status" value="1"/>
</dbReference>
<dbReference type="PANTHER" id="PTHR15893">
    <property type="entry name" value="RIBOSOMAL PROTEIN L27"/>
    <property type="match status" value="1"/>
</dbReference>
<dbReference type="Pfam" id="PF01016">
    <property type="entry name" value="Ribosomal_L27"/>
    <property type="match status" value="1"/>
</dbReference>
<dbReference type="PRINTS" id="PR00063">
    <property type="entry name" value="RIBOSOMALL27"/>
</dbReference>
<dbReference type="SUPFAM" id="SSF110324">
    <property type="entry name" value="Ribosomal L27 protein-like"/>
    <property type="match status" value="1"/>
</dbReference>
<dbReference type="PROSITE" id="PS00831">
    <property type="entry name" value="RIBOSOMAL_L27"/>
    <property type="match status" value="1"/>
</dbReference>
<protein>
    <recommendedName>
        <fullName evidence="1">Large ribosomal subunit protein bL27</fullName>
    </recommendedName>
    <alternativeName>
        <fullName evidence="3">50S ribosomal protein L27</fullName>
    </alternativeName>
</protein>
<gene>
    <name evidence="1" type="primary">rpmA</name>
    <name type="ordered locus">NSE_0897</name>
</gene>
<reference key="1">
    <citation type="journal article" date="2006" name="PLoS Genet.">
        <title>Comparative genomics of emerging human ehrlichiosis agents.</title>
        <authorList>
            <person name="Dunning Hotopp J.C."/>
            <person name="Lin M."/>
            <person name="Madupu R."/>
            <person name="Crabtree J."/>
            <person name="Angiuoli S.V."/>
            <person name="Eisen J.A."/>
            <person name="Seshadri R."/>
            <person name="Ren Q."/>
            <person name="Wu M."/>
            <person name="Utterback T.R."/>
            <person name="Smith S."/>
            <person name="Lewis M."/>
            <person name="Khouri H."/>
            <person name="Zhang C."/>
            <person name="Niu H."/>
            <person name="Lin Q."/>
            <person name="Ohashi N."/>
            <person name="Zhi N."/>
            <person name="Nelson W.C."/>
            <person name="Brinkac L.M."/>
            <person name="Dodson R.J."/>
            <person name="Rosovitz M.J."/>
            <person name="Sundaram J.P."/>
            <person name="Daugherty S.C."/>
            <person name="Davidsen T."/>
            <person name="Durkin A.S."/>
            <person name="Gwinn M.L."/>
            <person name="Haft D.H."/>
            <person name="Selengut J.D."/>
            <person name="Sullivan S.A."/>
            <person name="Zafar N."/>
            <person name="Zhou L."/>
            <person name="Benahmed F."/>
            <person name="Forberger H."/>
            <person name="Halpin R."/>
            <person name="Mulligan S."/>
            <person name="Robinson J."/>
            <person name="White O."/>
            <person name="Rikihisa Y."/>
            <person name="Tettelin H."/>
        </authorList>
    </citation>
    <scope>NUCLEOTIDE SEQUENCE [LARGE SCALE GENOMIC DNA]</scope>
    <source>
        <strain>ATCC VR-367 / Miyayama</strain>
    </source>
</reference>
<organism>
    <name type="scientific">Neorickettsia sennetsu (strain ATCC VR-367 / Miyayama)</name>
    <name type="common">Ehrlichia sennetsu</name>
    <dbReference type="NCBI Taxonomy" id="222891"/>
    <lineage>
        <taxon>Bacteria</taxon>
        <taxon>Pseudomonadati</taxon>
        <taxon>Pseudomonadota</taxon>
        <taxon>Alphaproteobacteria</taxon>
        <taxon>Rickettsiales</taxon>
        <taxon>Anaplasmataceae</taxon>
        <taxon>Neorickettsia</taxon>
    </lineage>
</organism>
<evidence type="ECO:0000255" key="1">
    <source>
        <dbReference type="HAMAP-Rule" id="MF_00539"/>
    </source>
</evidence>
<evidence type="ECO:0000256" key="2">
    <source>
        <dbReference type="SAM" id="MobiDB-lite"/>
    </source>
</evidence>
<evidence type="ECO:0000305" key="3"/>
<sequence>MATKKAGGSSSNGRDSIGKRLGVKKFGSERVIPGDIIVRQRGTKFHPGRNVGMGSDHTIFAMKSGSVSFSVGLRGRRFVHVV</sequence>
<name>RL27_NEOSM</name>
<keyword id="KW-0687">Ribonucleoprotein</keyword>
<keyword id="KW-0689">Ribosomal protein</keyword>
<accession>Q2GCN3</accession>
<feature type="chain" id="PRO_1000017528" description="Large ribosomal subunit protein bL27">
    <location>
        <begin position="1"/>
        <end position="82"/>
    </location>
</feature>
<feature type="region of interest" description="Disordered" evidence="2">
    <location>
        <begin position="1"/>
        <end position="20"/>
    </location>
</feature>